<reference key="1">
    <citation type="journal article" date="2006" name="Toxicon">
        <title>HgeTx1, the first K(+)-channel specific toxin characterized from the venom of the scorpion Hadrurus gertschi Soleglad.</title>
        <authorList>
            <person name="Schwartz E.F."/>
            <person name="Schwartz C.A."/>
            <person name="Gomez-Lagunas F."/>
            <person name="Zamudio F.Z."/>
            <person name="Possani L.D."/>
        </authorList>
    </citation>
    <scope>PROTEIN SEQUENCE</scope>
    <scope>FUNCTION</scope>
    <scope>SUBCELLULAR LOCATION</scope>
    <scope>MASS SPECTROMETRY</scope>
    <scope>DISULFIDE BONDS</scope>
    <source>
        <tissue>Venom</tissue>
    </source>
</reference>
<comment type="function">
    <text evidence="2">Blocks Shaker B channels expressed in Sf9 cells, with a dissociation constant of 52 nM.</text>
</comment>
<comment type="subcellular location">
    <subcellularLocation>
        <location evidence="2">Secreted</location>
    </subcellularLocation>
</comment>
<comment type="tissue specificity">
    <text evidence="5">Expressed by the venom gland.</text>
</comment>
<comment type="domain">
    <text evidence="4">Has the structural arrangement of an alpha-helix connected to antiparallel beta-sheets by disulfide bonds (CS-alpha/beta).</text>
</comment>
<comment type="mass spectrometry"/>
<comment type="similarity">
    <text evidence="1">Belongs to the short scorpion toxin superfamily. Potassium channel inhibitor family. Alpha-KTx 06 subfamily.</text>
</comment>
<dbReference type="SMR" id="P84864"/>
<dbReference type="GO" id="GO:0005576">
    <property type="term" value="C:extracellular region"/>
    <property type="evidence" value="ECO:0007669"/>
    <property type="project" value="UniProtKB-SubCell"/>
</dbReference>
<dbReference type="GO" id="GO:0008200">
    <property type="term" value="F:ion channel inhibitor activity"/>
    <property type="evidence" value="ECO:0007669"/>
    <property type="project" value="InterPro"/>
</dbReference>
<dbReference type="GO" id="GO:0015459">
    <property type="term" value="F:potassium channel regulator activity"/>
    <property type="evidence" value="ECO:0007669"/>
    <property type="project" value="UniProtKB-KW"/>
</dbReference>
<dbReference type="GO" id="GO:0090729">
    <property type="term" value="F:toxin activity"/>
    <property type="evidence" value="ECO:0007669"/>
    <property type="project" value="UniProtKB-KW"/>
</dbReference>
<dbReference type="Gene3D" id="3.30.30.10">
    <property type="entry name" value="Knottin, scorpion toxin-like"/>
    <property type="match status" value="1"/>
</dbReference>
<dbReference type="InterPro" id="IPR036574">
    <property type="entry name" value="Scorpion_toxin-like_sf"/>
</dbReference>
<dbReference type="InterPro" id="IPR001947">
    <property type="entry name" value="Scorpion_toxinS_K_inh"/>
</dbReference>
<dbReference type="Pfam" id="PF00451">
    <property type="entry name" value="Toxin_2"/>
    <property type="match status" value="1"/>
</dbReference>
<dbReference type="PRINTS" id="PR00286">
    <property type="entry name" value="CHARYBDTOXIN"/>
</dbReference>
<dbReference type="SUPFAM" id="SSF57095">
    <property type="entry name" value="Scorpion toxin-like"/>
    <property type="match status" value="1"/>
</dbReference>
<dbReference type="PROSITE" id="PS01138">
    <property type="entry name" value="SCORP_SHORT_TOXIN"/>
    <property type="match status" value="1"/>
</dbReference>
<evidence type="ECO:0000255" key="1"/>
<evidence type="ECO:0000269" key="2">
    <source>
    </source>
</evidence>
<evidence type="ECO:0000303" key="3">
    <source>
    </source>
</evidence>
<evidence type="ECO:0000305" key="4"/>
<evidence type="ECO:0000305" key="5">
    <source>
    </source>
</evidence>
<organism>
    <name type="scientific">Hoffmannihadrurus gertschi</name>
    <name type="common">Scorpion</name>
    <name type="synonym">Hadrurus gertschi</name>
    <dbReference type="NCBI Taxonomy" id="380989"/>
    <lineage>
        <taxon>Eukaryota</taxon>
        <taxon>Metazoa</taxon>
        <taxon>Ecdysozoa</taxon>
        <taxon>Arthropoda</taxon>
        <taxon>Chelicerata</taxon>
        <taxon>Arachnida</taxon>
        <taxon>Scorpiones</taxon>
        <taxon>Iurida</taxon>
        <taxon>Iuroidea</taxon>
        <taxon>Hadrurus</taxon>
    </lineage>
</organism>
<keyword id="KW-0903">Direct protein sequencing</keyword>
<keyword id="KW-1015">Disulfide bond</keyword>
<keyword id="KW-0872">Ion channel impairing toxin</keyword>
<keyword id="KW-0528">Neurotoxin</keyword>
<keyword id="KW-0632">Potassium channel impairing toxin</keyword>
<keyword id="KW-0964">Secreted</keyword>
<keyword id="KW-0800">Toxin</keyword>
<accession>P84864</accession>
<name>KAX6E_HOFGE</name>
<feature type="peptide" id="PRO_0000273517" description="Potassium channel toxin alpha-KTx 6.14" evidence="2">
    <location>
        <begin position="1"/>
        <end position="36"/>
    </location>
</feature>
<feature type="disulfide bond" evidence="2">
    <location>
        <begin position="5"/>
        <end position="25"/>
    </location>
</feature>
<feature type="disulfide bond" evidence="2">
    <location>
        <begin position="11"/>
        <end position="30"/>
    </location>
</feature>
<feature type="disulfide bond" evidence="2">
    <location>
        <begin position="15"/>
        <end position="32"/>
    </location>
</feature>
<feature type="disulfide bond" evidence="2">
    <location>
        <begin position="20"/>
        <end position="35"/>
    </location>
</feature>
<protein>
    <recommendedName>
        <fullName evidence="3">Potassium channel toxin alpha-KTx 6.14</fullName>
    </recommendedName>
    <alternativeName>
        <fullName evidence="3">HgeTx1</fullName>
    </alternativeName>
</protein>
<sequence>TGTSCISPKQCTEPCRAKGCKHGKCMNRKCHCMLCL</sequence>
<proteinExistence type="evidence at protein level"/>